<feature type="chain" id="PRO_1000021741" description="Adenylate kinase">
    <location>
        <begin position="1"/>
        <end position="213"/>
    </location>
</feature>
<feature type="region of interest" description="NMP" evidence="1">
    <location>
        <begin position="30"/>
        <end position="59"/>
    </location>
</feature>
<feature type="region of interest" description="LID" evidence="1">
    <location>
        <begin position="126"/>
        <end position="163"/>
    </location>
</feature>
<feature type="binding site" evidence="1">
    <location>
        <begin position="10"/>
        <end position="15"/>
    </location>
    <ligand>
        <name>ATP</name>
        <dbReference type="ChEBI" id="CHEBI:30616"/>
    </ligand>
</feature>
<feature type="binding site" evidence="1">
    <location>
        <position position="31"/>
    </location>
    <ligand>
        <name>AMP</name>
        <dbReference type="ChEBI" id="CHEBI:456215"/>
    </ligand>
</feature>
<feature type="binding site" evidence="1">
    <location>
        <position position="36"/>
    </location>
    <ligand>
        <name>AMP</name>
        <dbReference type="ChEBI" id="CHEBI:456215"/>
    </ligand>
</feature>
<feature type="binding site" evidence="1">
    <location>
        <begin position="57"/>
        <end position="59"/>
    </location>
    <ligand>
        <name>AMP</name>
        <dbReference type="ChEBI" id="CHEBI:456215"/>
    </ligand>
</feature>
<feature type="binding site" evidence="1">
    <location>
        <begin position="85"/>
        <end position="88"/>
    </location>
    <ligand>
        <name>AMP</name>
        <dbReference type="ChEBI" id="CHEBI:456215"/>
    </ligand>
</feature>
<feature type="binding site" evidence="1">
    <location>
        <position position="92"/>
    </location>
    <ligand>
        <name>AMP</name>
        <dbReference type="ChEBI" id="CHEBI:456215"/>
    </ligand>
</feature>
<feature type="binding site" evidence="1">
    <location>
        <position position="127"/>
    </location>
    <ligand>
        <name>ATP</name>
        <dbReference type="ChEBI" id="CHEBI:30616"/>
    </ligand>
</feature>
<feature type="binding site" evidence="1">
    <location>
        <position position="130"/>
    </location>
    <ligand>
        <name>Zn(2+)</name>
        <dbReference type="ChEBI" id="CHEBI:29105"/>
        <note>structural</note>
    </ligand>
</feature>
<feature type="binding site" evidence="1">
    <location>
        <position position="133"/>
    </location>
    <ligand>
        <name>Zn(2+)</name>
        <dbReference type="ChEBI" id="CHEBI:29105"/>
        <note>structural</note>
    </ligand>
</feature>
<feature type="binding site" evidence="1">
    <location>
        <position position="150"/>
    </location>
    <ligand>
        <name>Zn(2+)</name>
        <dbReference type="ChEBI" id="CHEBI:29105"/>
        <note>structural</note>
    </ligand>
</feature>
<feature type="binding site" evidence="1">
    <location>
        <position position="153"/>
    </location>
    <ligand>
        <name>Zn(2+)</name>
        <dbReference type="ChEBI" id="CHEBI:29105"/>
        <note>structural</note>
    </ligand>
</feature>
<feature type="binding site" evidence="1">
    <location>
        <position position="160"/>
    </location>
    <ligand>
        <name>AMP</name>
        <dbReference type="ChEBI" id="CHEBI:456215"/>
    </ligand>
</feature>
<feature type="binding site" evidence="1">
    <location>
        <position position="171"/>
    </location>
    <ligand>
        <name>AMP</name>
        <dbReference type="ChEBI" id="CHEBI:456215"/>
    </ligand>
</feature>
<feature type="binding site" evidence="1">
    <location>
        <position position="199"/>
    </location>
    <ligand>
        <name>ATP</name>
        <dbReference type="ChEBI" id="CHEBI:30616"/>
    </ligand>
</feature>
<dbReference type="EC" id="2.7.4.3" evidence="1"/>
<dbReference type="EMBL" id="CP000471">
    <property type="protein sequence ID" value="ABK44261.1"/>
    <property type="molecule type" value="Genomic_DNA"/>
</dbReference>
<dbReference type="RefSeq" id="WP_011713409.1">
    <property type="nucleotide sequence ID" value="NC_008576.1"/>
</dbReference>
<dbReference type="SMR" id="A0L8G8"/>
<dbReference type="STRING" id="156889.Mmc1_1753"/>
<dbReference type="KEGG" id="mgm:Mmc1_1753"/>
<dbReference type="eggNOG" id="COG0563">
    <property type="taxonomic scope" value="Bacteria"/>
</dbReference>
<dbReference type="HOGENOM" id="CLU_032354_1_2_5"/>
<dbReference type="OrthoDB" id="9805030at2"/>
<dbReference type="UniPathway" id="UPA00588">
    <property type="reaction ID" value="UER00649"/>
</dbReference>
<dbReference type="Proteomes" id="UP000002586">
    <property type="component" value="Chromosome"/>
</dbReference>
<dbReference type="GO" id="GO:0005737">
    <property type="term" value="C:cytoplasm"/>
    <property type="evidence" value="ECO:0007669"/>
    <property type="project" value="UniProtKB-SubCell"/>
</dbReference>
<dbReference type="GO" id="GO:0004017">
    <property type="term" value="F:adenylate kinase activity"/>
    <property type="evidence" value="ECO:0007669"/>
    <property type="project" value="UniProtKB-UniRule"/>
</dbReference>
<dbReference type="GO" id="GO:0005524">
    <property type="term" value="F:ATP binding"/>
    <property type="evidence" value="ECO:0007669"/>
    <property type="project" value="UniProtKB-UniRule"/>
</dbReference>
<dbReference type="GO" id="GO:0008270">
    <property type="term" value="F:zinc ion binding"/>
    <property type="evidence" value="ECO:0007669"/>
    <property type="project" value="UniProtKB-UniRule"/>
</dbReference>
<dbReference type="GO" id="GO:0044209">
    <property type="term" value="P:AMP salvage"/>
    <property type="evidence" value="ECO:0007669"/>
    <property type="project" value="UniProtKB-UniRule"/>
</dbReference>
<dbReference type="CDD" id="cd01428">
    <property type="entry name" value="ADK"/>
    <property type="match status" value="1"/>
</dbReference>
<dbReference type="FunFam" id="3.40.50.300:FF:000106">
    <property type="entry name" value="Adenylate kinase mitochondrial"/>
    <property type="match status" value="1"/>
</dbReference>
<dbReference type="Gene3D" id="3.40.50.300">
    <property type="entry name" value="P-loop containing nucleotide triphosphate hydrolases"/>
    <property type="match status" value="1"/>
</dbReference>
<dbReference type="HAMAP" id="MF_00235">
    <property type="entry name" value="Adenylate_kinase_Adk"/>
    <property type="match status" value="1"/>
</dbReference>
<dbReference type="InterPro" id="IPR006259">
    <property type="entry name" value="Adenyl_kin_sub"/>
</dbReference>
<dbReference type="InterPro" id="IPR000850">
    <property type="entry name" value="Adenylat/UMP-CMP_kin"/>
</dbReference>
<dbReference type="InterPro" id="IPR033690">
    <property type="entry name" value="Adenylat_kinase_CS"/>
</dbReference>
<dbReference type="InterPro" id="IPR007862">
    <property type="entry name" value="Adenylate_kinase_lid-dom"/>
</dbReference>
<dbReference type="InterPro" id="IPR027417">
    <property type="entry name" value="P-loop_NTPase"/>
</dbReference>
<dbReference type="NCBIfam" id="TIGR01351">
    <property type="entry name" value="adk"/>
    <property type="match status" value="1"/>
</dbReference>
<dbReference type="NCBIfam" id="NF001380">
    <property type="entry name" value="PRK00279.1-2"/>
    <property type="match status" value="1"/>
</dbReference>
<dbReference type="NCBIfam" id="NF001381">
    <property type="entry name" value="PRK00279.1-3"/>
    <property type="match status" value="1"/>
</dbReference>
<dbReference type="NCBIfam" id="NF011100">
    <property type="entry name" value="PRK14527.1"/>
    <property type="match status" value="1"/>
</dbReference>
<dbReference type="NCBIfam" id="NF011105">
    <property type="entry name" value="PRK14532.1"/>
    <property type="match status" value="1"/>
</dbReference>
<dbReference type="PANTHER" id="PTHR23359">
    <property type="entry name" value="NUCLEOTIDE KINASE"/>
    <property type="match status" value="1"/>
</dbReference>
<dbReference type="Pfam" id="PF00406">
    <property type="entry name" value="ADK"/>
    <property type="match status" value="1"/>
</dbReference>
<dbReference type="Pfam" id="PF05191">
    <property type="entry name" value="ADK_lid"/>
    <property type="match status" value="1"/>
</dbReference>
<dbReference type="PRINTS" id="PR00094">
    <property type="entry name" value="ADENYLTKNASE"/>
</dbReference>
<dbReference type="SUPFAM" id="SSF52540">
    <property type="entry name" value="P-loop containing nucleoside triphosphate hydrolases"/>
    <property type="match status" value="1"/>
</dbReference>
<dbReference type="PROSITE" id="PS00113">
    <property type="entry name" value="ADENYLATE_KINASE"/>
    <property type="match status" value="1"/>
</dbReference>
<proteinExistence type="inferred from homology"/>
<protein>
    <recommendedName>
        <fullName evidence="1">Adenylate kinase</fullName>
        <shortName evidence="1">AK</shortName>
        <ecNumber evidence="1">2.7.4.3</ecNumber>
    </recommendedName>
    <alternativeName>
        <fullName evidence="1">ATP-AMP transphosphorylase</fullName>
    </alternativeName>
    <alternativeName>
        <fullName evidence="1">ATP:AMP phosphotransferase</fullName>
    </alternativeName>
    <alternativeName>
        <fullName evidence="1">Adenylate monophosphate kinase</fullName>
    </alternativeName>
</protein>
<evidence type="ECO:0000255" key="1">
    <source>
        <dbReference type="HAMAP-Rule" id="MF_00235"/>
    </source>
</evidence>
<keyword id="KW-0067">ATP-binding</keyword>
<keyword id="KW-0963">Cytoplasm</keyword>
<keyword id="KW-0418">Kinase</keyword>
<keyword id="KW-0479">Metal-binding</keyword>
<keyword id="KW-0545">Nucleotide biosynthesis</keyword>
<keyword id="KW-0547">Nucleotide-binding</keyword>
<keyword id="KW-1185">Reference proteome</keyword>
<keyword id="KW-0808">Transferase</keyword>
<keyword id="KW-0862">Zinc</keyword>
<name>KAD_MAGMM</name>
<accession>A0L8G8</accession>
<gene>
    <name evidence="1" type="primary">adk</name>
    <name type="ordered locus">Mmc1_1753</name>
</gene>
<organism>
    <name type="scientific">Magnetococcus marinus (strain ATCC BAA-1437 / JCM 17883 / MC-1)</name>
    <dbReference type="NCBI Taxonomy" id="156889"/>
    <lineage>
        <taxon>Bacteria</taxon>
        <taxon>Pseudomonadati</taxon>
        <taxon>Pseudomonadota</taxon>
        <taxon>Alphaproteobacteria</taxon>
        <taxon>Magnetococcales</taxon>
        <taxon>Magnetococcaceae</taxon>
        <taxon>Magnetococcus</taxon>
    </lineage>
</organism>
<comment type="function">
    <text evidence="1">Catalyzes the reversible transfer of the terminal phosphate group between ATP and AMP. Plays an important role in cellular energy homeostasis and in adenine nucleotide metabolism.</text>
</comment>
<comment type="catalytic activity">
    <reaction evidence="1">
        <text>AMP + ATP = 2 ADP</text>
        <dbReference type="Rhea" id="RHEA:12973"/>
        <dbReference type="ChEBI" id="CHEBI:30616"/>
        <dbReference type="ChEBI" id="CHEBI:456215"/>
        <dbReference type="ChEBI" id="CHEBI:456216"/>
        <dbReference type="EC" id="2.7.4.3"/>
    </reaction>
</comment>
<comment type="pathway">
    <text evidence="1">Purine metabolism; AMP biosynthesis via salvage pathway; AMP from ADP: step 1/1.</text>
</comment>
<comment type="subunit">
    <text evidence="1">Monomer.</text>
</comment>
<comment type="subcellular location">
    <subcellularLocation>
        <location evidence="1">Cytoplasm</location>
    </subcellularLocation>
</comment>
<comment type="domain">
    <text evidence="1">Consists of three domains, a large central CORE domain and two small peripheral domains, NMPbind and LID, which undergo movements during catalysis. The LID domain closes over the site of phosphoryl transfer upon ATP binding. Assembling and dissambling the active center during each catalytic cycle provides an effective means to prevent ATP hydrolysis. Some bacteria have evolved a zinc-coordinating structure that stabilizes the LID domain.</text>
</comment>
<comment type="similarity">
    <text evidence="1">Belongs to the adenylate kinase family.</text>
</comment>
<sequence length="213" mass="22891">MKVVLMGPPGAGKGTQARKISEKYGIPQLSTGDMLRAAVAAGSEVGLRAKAAMESGSLVTDEIVLGIIQDRTDEADCDQGYLLDGFPRTLAQAEGLDAMLAKRNQSIDVVIDIKVEDEPLVARITGRSSCEKCGEGYHDSFKPSAQPNVCDKCSGTLKRRADDNADTVRNRLEVYHKQTAPLIGYYDAKGLLKEVDGMQEMGKVLEDLCAILG</sequence>
<reference key="1">
    <citation type="journal article" date="2009" name="Appl. Environ. Microbiol.">
        <title>Complete genome sequence of the chemolithoautotrophic marine magnetotactic coccus strain MC-1.</title>
        <authorList>
            <person name="Schubbe S."/>
            <person name="Williams T.J."/>
            <person name="Xie G."/>
            <person name="Kiss H.E."/>
            <person name="Brettin T.S."/>
            <person name="Martinez D."/>
            <person name="Ross C.A."/>
            <person name="Schuler D."/>
            <person name="Cox B.L."/>
            <person name="Nealson K.H."/>
            <person name="Bazylinski D.A."/>
        </authorList>
    </citation>
    <scope>NUCLEOTIDE SEQUENCE [LARGE SCALE GENOMIC DNA]</scope>
    <source>
        <strain>ATCC BAA-1437 / JCM 17883 / MC-1</strain>
    </source>
</reference>